<accession>Q4L6Y0</accession>
<dbReference type="EC" id="2.4.2.7" evidence="1"/>
<dbReference type="EMBL" id="AP006716">
    <property type="protein sequence ID" value="BAE04595.1"/>
    <property type="molecule type" value="Genomic_DNA"/>
</dbReference>
<dbReference type="RefSeq" id="WP_011275584.1">
    <property type="nucleotide sequence ID" value="NC_007168.1"/>
</dbReference>
<dbReference type="SMR" id="Q4L6Y0"/>
<dbReference type="KEGG" id="sha:SH1286"/>
<dbReference type="eggNOG" id="COG0503">
    <property type="taxonomic scope" value="Bacteria"/>
</dbReference>
<dbReference type="HOGENOM" id="CLU_063339_3_0_9"/>
<dbReference type="OrthoDB" id="9803963at2"/>
<dbReference type="UniPathway" id="UPA00588">
    <property type="reaction ID" value="UER00646"/>
</dbReference>
<dbReference type="Proteomes" id="UP000000543">
    <property type="component" value="Chromosome"/>
</dbReference>
<dbReference type="GO" id="GO:0005737">
    <property type="term" value="C:cytoplasm"/>
    <property type="evidence" value="ECO:0007669"/>
    <property type="project" value="UniProtKB-SubCell"/>
</dbReference>
<dbReference type="GO" id="GO:0002055">
    <property type="term" value="F:adenine binding"/>
    <property type="evidence" value="ECO:0007669"/>
    <property type="project" value="TreeGrafter"/>
</dbReference>
<dbReference type="GO" id="GO:0003999">
    <property type="term" value="F:adenine phosphoribosyltransferase activity"/>
    <property type="evidence" value="ECO:0007669"/>
    <property type="project" value="UniProtKB-UniRule"/>
</dbReference>
<dbReference type="GO" id="GO:0016208">
    <property type="term" value="F:AMP binding"/>
    <property type="evidence" value="ECO:0007669"/>
    <property type="project" value="TreeGrafter"/>
</dbReference>
<dbReference type="GO" id="GO:0006168">
    <property type="term" value="P:adenine salvage"/>
    <property type="evidence" value="ECO:0007669"/>
    <property type="project" value="InterPro"/>
</dbReference>
<dbReference type="GO" id="GO:0044209">
    <property type="term" value="P:AMP salvage"/>
    <property type="evidence" value="ECO:0007669"/>
    <property type="project" value="UniProtKB-UniRule"/>
</dbReference>
<dbReference type="GO" id="GO:0006166">
    <property type="term" value="P:purine ribonucleoside salvage"/>
    <property type="evidence" value="ECO:0007669"/>
    <property type="project" value="UniProtKB-KW"/>
</dbReference>
<dbReference type="CDD" id="cd06223">
    <property type="entry name" value="PRTases_typeI"/>
    <property type="match status" value="1"/>
</dbReference>
<dbReference type="FunFam" id="3.40.50.2020:FF:000004">
    <property type="entry name" value="Adenine phosphoribosyltransferase"/>
    <property type="match status" value="1"/>
</dbReference>
<dbReference type="Gene3D" id="3.40.50.2020">
    <property type="match status" value="1"/>
</dbReference>
<dbReference type="HAMAP" id="MF_00004">
    <property type="entry name" value="Aden_phosphoribosyltr"/>
    <property type="match status" value="1"/>
</dbReference>
<dbReference type="InterPro" id="IPR005764">
    <property type="entry name" value="Ade_phspho_trans"/>
</dbReference>
<dbReference type="InterPro" id="IPR000836">
    <property type="entry name" value="PRibTrfase_dom"/>
</dbReference>
<dbReference type="InterPro" id="IPR029057">
    <property type="entry name" value="PRTase-like"/>
</dbReference>
<dbReference type="InterPro" id="IPR050054">
    <property type="entry name" value="UPRTase/APRTase"/>
</dbReference>
<dbReference type="NCBIfam" id="TIGR01090">
    <property type="entry name" value="apt"/>
    <property type="match status" value="1"/>
</dbReference>
<dbReference type="NCBIfam" id="NF002633">
    <property type="entry name" value="PRK02304.1-2"/>
    <property type="match status" value="1"/>
</dbReference>
<dbReference type="NCBIfam" id="NF002634">
    <property type="entry name" value="PRK02304.1-3"/>
    <property type="match status" value="1"/>
</dbReference>
<dbReference type="NCBIfam" id="NF002636">
    <property type="entry name" value="PRK02304.1-5"/>
    <property type="match status" value="1"/>
</dbReference>
<dbReference type="PANTHER" id="PTHR32315">
    <property type="entry name" value="ADENINE PHOSPHORIBOSYLTRANSFERASE"/>
    <property type="match status" value="1"/>
</dbReference>
<dbReference type="PANTHER" id="PTHR32315:SF3">
    <property type="entry name" value="ADENINE PHOSPHORIBOSYLTRANSFERASE"/>
    <property type="match status" value="1"/>
</dbReference>
<dbReference type="Pfam" id="PF00156">
    <property type="entry name" value="Pribosyltran"/>
    <property type="match status" value="1"/>
</dbReference>
<dbReference type="SUPFAM" id="SSF53271">
    <property type="entry name" value="PRTase-like"/>
    <property type="match status" value="1"/>
</dbReference>
<feature type="chain" id="PRO_1000000349" description="Adenine phosphoribosyltransferase">
    <location>
        <begin position="1"/>
        <end position="172"/>
    </location>
</feature>
<proteinExistence type="inferred from homology"/>
<keyword id="KW-0963">Cytoplasm</keyword>
<keyword id="KW-0328">Glycosyltransferase</keyword>
<keyword id="KW-0660">Purine salvage</keyword>
<keyword id="KW-0808">Transferase</keyword>
<protein>
    <recommendedName>
        <fullName evidence="1">Adenine phosphoribosyltransferase</fullName>
        <shortName evidence="1">APRT</shortName>
        <ecNumber evidence="1">2.4.2.7</ecNumber>
    </recommendedName>
</protein>
<sequence length="172" mass="19102">MDLKQYVSEVQDWPKPGVSFKDITTIMDNGEAYGYATDQIVKYAKDRDVDVVVGPEARGFIIGCPVAYSMGIGFAPVRKEGKLPREVIRYEYDLEYGTNILTMHNDAIKPGQRVLITDDLLATGGTIEAAIKLVEKLGGIVVGIAFIIELKYLNGIEKIKDYDVMSLISYDE</sequence>
<organism>
    <name type="scientific">Staphylococcus haemolyticus (strain JCSC1435)</name>
    <dbReference type="NCBI Taxonomy" id="279808"/>
    <lineage>
        <taxon>Bacteria</taxon>
        <taxon>Bacillati</taxon>
        <taxon>Bacillota</taxon>
        <taxon>Bacilli</taxon>
        <taxon>Bacillales</taxon>
        <taxon>Staphylococcaceae</taxon>
        <taxon>Staphylococcus</taxon>
    </lineage>
</organism>
<evidence type="ECO:0000255" key="1">
    <source>
        <dbReference type="HAMAP-Rule" id="MF_00004"/>
    </source>
</evidence>
<reference key="1">
    <citation type="journal article" date="2005" name="J. Bacteriol.">
        <title>Whole-genome sequencing of Staphylococcus haemolyticus uncovers the extreme plasticity of its genome and the evolution of human-colonizing staphylococcal species.</title>
        <authorList>
            <person name="Takeuchi F."/>
            <person name="Watanabe S."/>
            <person name="Baba T."/>
            <person name="Yuzawa H."/>
            <person name="Ito T."/>
            <person name="Morimoto Y."/>
            <person name="Kuroda M."/>
            <person name="Cui L."/>
            <person name="Takahashi M."/>
            <person name="Ankai A."/>
            <person name="Baba S."/>
            <person name="Fukui S."/>
            <person name="Lee J.C."/>
            <person name="Hiramatsu K."/>
        </authorList>
    </citation>
    <scope>NUCLEOTIDE SEQUENCE [LARGE SCALE GENOMIC DNA]</scope>
    <source>
        <strain>JCSC1435</strain>
    </source>
</reference>
<name>APT_STAHJ</name>
<comment type="function">
    <text evidence="1">Catalyzes a salvage reaction resulting in the formation of AMP, that is energically less costly than de novo synthesis.</text>
</comment>
<comment type="catalytic activity">
    <reaction evidence="1">
        <text>AMP + diphosphate = 5-phospho-alpha-D-ribose 1-diphosphate + adenine</text>
        <dbReference type="Rhea" id="RHEA:16609"/>
        <dbReference type="ChEBI" id="CHEBI:16708"/>
        <dbReference type="ChEBI" id="CHEBI:33019"/>
        <dbReference type="ChEBI" id="CHEBI:58017"/>
        <dbReference type="ChEBI" id="CHEBI:456215"/>
        <dbReference type="EC" id="2.4.2.7"/>
    </reaction>
</comment>
<comment type="pathway">
    <text evidence="1">Purine metabolism; AMP biosynthesis via salvage pathway; AMP from adenine: step 1/1.</text>
</comment>
<comment type="subunit">
    <text evidence="1">Homodimer.</text>
</comment>
<comment type="subcellular location">
    <subcellularLocation>
        <location evidence="1">Cytoplasm</location>
    </subcellularLocation>
</comment>
<comment type="similarity">
    <text evidence="1">Belongs to the purine/pyrimidine phosphoribosyltransferase family.</text>
</comment>
<gene>
    <name evidence="1" type="primary">apt</name>
    <name type="ordered locus">SH1286</name>
</gene>